<comment type="function">
    <text evidence="1">Methylates the class 1 translation termination release factors RF1/PrfA and RF2/PrfB on the glutamine residue of the universally conserved GGQ motif.</text>
</comment>
<comment type="catalytic activity">
    <reaction evidence="1">
        <text>L-glutaminyl-[peptide chain release factor] + S-adenosyl-L-methionine = N(5)-methyl-L-glutaminyl-[peptide chain release factor] + S-adenosyl-L-homocysteine + H(+)</text>
        <dbReference type="Rhea" id="RHEA:42896"/>
        <dbReference type="Rhea" id="RHEA-COMP:10271"/>
        <dbReference type="Rhea" id="RHEA-COMP:10272"/>
        <dbReference type="ChEBI" id="CHEBI:15378"/>
        <dbReference type="ChEBI" id="CHEBI:30011"/>
        <dbReference type="ChEBI" id="CHEBI:57856"/>
        <dbReference type="ChEBI" id="CHEBI:59789"/>
        <dbReference type="ChEBI" id="CHEBI:61891"/>
        <dbReference type="EC" id="2.1.1.297"/>
    </reaction>
</comment>
<comment type="similarity">
    <text evidence="1">Belongs to the protein N5-glutamine methyltransferase family. PrmC subfamily.</text>
</comment>
<feature type="chain" id="PRO_0000157170" description="Release factor glutamine methyltransferase">
    <location>
        <begin position="1"/>
        <end position="286"/>
    </location>
</feature>
<feature type="binding site" evidence="1">
    <location>
        <begin position="121"/>
        <end position="125"/>
    </location>
    <ligand>
        <name>S-adenosyl-L-methionine</name>
        <dbReference type="ChEBI" id="CHEBI:59789"/>
    </ligand>
</feature>
<feature type="binding site" evidence="1">
    <location>
        <position position="144"/>
    </location>
    <ligand>
        <name>S-adenosyl-L-methionine</name>
        <dbReference type="ChEBI" id="CHEBI:59789"/>
    </ligand>
</feature>
<feature type="binding site" evidence="1">
    <location>
        <position position="172"/>
    </location>
    <ligand>
        <name>S-adenosyl-L-methionine</name>
        <dbReference type="ChEBI" id="CHEBI:59789"/>
    </ligand>
</feature>
<feature type="binding site" evidence="1">
    <location>
        <begin position="188"/>
        <end position="191"/>
    </location>
    <ligand>
        <name>substrate</name>
    </ligand>
</feature>
<feature type="binding site" evidence="1">
    <location>
        <position position="188"/>
    </location>
    <ligand>
        <name>S-adenosyl-L-methionine</name>
        <dbReference type="ChEBI" id="CHEBI:59789"/>
    </ligand>
</feature>
<keyword id="KW-0489">Methyltransferase</keyword>
<keyword id="KW-1185">Reference proteome</keyword>
<keyword id="KW-0949">S-adenosyl-L-methionine</keyword>
<keyword id="KW-0808">Transferase</keyword>
<reference key="1">
    <citation type="journal article" date="2000" name="Nature">
        <title>DNA sequence of both chromosomes of the cholera pathogen Vibrio cholerae.</title>
        <authorList>
            <person name="Heidelberg J.F."/>
            <person name="Eisen J.A."/>
            <person name="Nelson W.C."/>
            <person name="Clayton R.A."/>
            <person name="Gwinn M.L."/>
            <person name="Dodson R.J."/>
            <person name="Haft D.H."/>
            <person name="Hickey E.K."/>
            <person name="Peterson J.D."/>
            <person name="Umayam L.A."/>
            <person name="Gill S.R."/>
            <person name="Nelson K.E."/>
            <person name="Read T.D."/>
            <person name="Tettelin H."/>
            <person name="Richardson D.L."/>
            <person name="Ermolaeva M.D."/>
            <person name="Vamathevan J.J."/>
            <person name="Bass S."/>
            <person name="Qin H."/>
            <person name="Dragoi I."/>
            <person name="Sellers P."/>
            <person name="McDonald L.A."/>
            <person name="Utterback T.R."/>
            <person name="Fleischmann R.D."/>
            <person name="Nierman W.C."/>
            <person name="White O."/>
            <person name="Salzberg S.L."/>
            <person name="Smith H.O."/>
            <person name="Colwell R.R."/>
            <person name="Mekalanos J.J."/>
            <person name="Venter J.C."/>
            <person name="Fraser C.M."/>
        </authorList>
    </citation>
    <scope>NUCLEOTIDE SEQUENCE [LARGE SCALE GENOMIC DNA]</scope>
    <source>
        <strain>ATCC 39315 / El Tor Inaba N16961</strain>
    </source>
</reference>
<proteinExistence type="inferred from homology"/>
<organism>
    <name type="scientific">Vibrio cholerae serotype O1 (strain ATCC 39315 / El Tor Inaba N16961)</name>
    <dbReference type="NCBI Taxonomy" id="243277"/>
    <lineage>
        <taxon>Bacteria</taxon>
        <taxon>Pseudomonadati</taxon>
        <taxon>Pseudomonadota</taxon>
        <taxon>Gammaproteobacteria</taxon>
        <taxon>Vibrionales</taxon>
        <taxon>Vibrionaceae</taxon>
        <taxon>Vibrio</taxon>
    </lineage>
</organism>
<dbReference type="EC" id="2.1.1.297" evidence="1"/>
<dbReference type="EMBL" id="AE003852">
    <property type="protein sequence ID" value="AAF95323.1"/>
    <property type="molecule type" value="Genomic_DNA"/>
</dbReference>
<dbReference type="PIR" id="A82109">
    <property type="entry name" value="A82109"/>
</dbReference>
<dbReference type="RefSeq" id="NP_231809.1">
    <property type="nucleotide sequence ID" value="NC_002505.1"/>
</dbReference>
<dbReference type="RefSeq" id="WP_000117270.1">
    <property type="nucleotide sequence ID" value="NZ_LT906614.1"/>
</dbReference>
<dbReference type="SMR" id="Q9KQ26"/>
<dbReference type="STRING" id="243277.VC_2178"/>
<dbReference type="DNASU" id="2613314"/>
<dbReference type="EnsemblBacteria" id="AAF95323">
    <property type="protein sequence ID" value="AAF95323"/>
    <property type="gene ID" value="VC_2178"/>
</dbReference>
<dbReference type="KEGG" id="vch:VC_2178"/>
<dbReference type="PATRIC" id="fig|243277.26.peg.2076"/>
<dbReference type="eggNOG" id="COG2890">
    <property type="taxonomic scope" value="Bacteria"/>
</dbReference>
<dbReference type="HOGENOM" id="CLU_018398_3_1_6"/>
<dbReference type="Proteomes" id="UP000000584">
    <property type="component" value="Chromosome 1"/>
</dbReference>
<dbReference type="GO" id="GO:0003676">
    <property type="term" value="F:nucleic acid binding"/>
    <property type="evidence" value="ECO:0007669"/>
    <property type="project" value="InterPro"/>
</dbReference>
<dbReference type="GO" id="GO:0102559">
    <property type="term" value="F:protein-(glutamine-N5) methyltransferase activity"/>
    <property type="evidence" value="ECO:0007669"/>
    <property type="project" value="UniProtKB-EC"/>
</dbReference>
<dbReference type="GO" id="GO:0036009">
    <property type="term" value="F:protein-glutamine N-methyltransferase activity"/>
    <property type="evidence" value="ECO:0000318"/>
    <property type="project" value="GO_Central"/>
</dbReference>
<dbReference type="GO" id="GO:0032259">
    <property type="term" value="P:methylation"/>
    <property type="evidence" value="ECO:0007669"/>
    <property type="project" value="UniProtKB-KW"/>
</dbReference>
<dbReference type="GO" id="GO:0006415">
    <property type="term" value="P:translational termination"/>
    <property type="evidence" value="ECO:0000318"/>
    <property type="project" value="GO_Central"/>
</dbReference>
<dbReference type="CDD" id="cd02440">
    <property type="entry name" value="AdoMet_MTases"/>
    <property type="match status" value="1"/>
</dbReference>
<dbReference type="FunFam" id="1.10.8.10:FF:000032">
    <property type="entry name" value="Release factor glutamine methyltransferase"/>
    <property type="match status" value="1"/>
</dbReference>
<dbReference type="FunFam" id="3.40.50.150:FF:000053">
    <property type="entry name" value="Release factor glutamine methyltransferase"/>
    <property type="match status" value="1"/>
</dbReference>
<dbReference type="Gene3D" id="1.10.8.10">
    <property type="entry name" value="DNA helicase RuvA subunit, C-terminal domain"/>
    <property type="match status" value="1"/>
</dbReference>
<dbReference type="Gene3D" id="3.40.50.150">
    <property type="entry name" value="Vaccinia Virus protein VP39"/>
    <property type="match status" value="1"/>
</dbReference>
<dbReference type="HAMAP" id="MF_02126">
    <property type="entry name" value="RF_methyltr_PrmC"/>
    <property type="match status" value="1"/>
</dbReference>
<dbReference type="InterPro" id="IPR002052">
    <property type="entry name" value="DNA_methylase_N6_adenine_CS"/>
</dbReference>
<dbReference type="InterPro" id="IPR004556">
    <property type="entry name" value="HemK-like"/>
</dbReference>
<dbReference type="InterPro" id="IPR050320">
    <property type="entry name" value="N5-glutamine_MTase"/>
</dbReference>
<dbReference type="InterPro" id="IPR040758">
    <property type="entry name" value="PrmC_N"/>
</dbReference>
<dbReference type="InterPro" id="IPR019874">
    <property type="entry name" value="RF_methyltr_PrmC"/>
</dbReference>
<dbReference type="InterPro" id="IPR029063">
    <property type="entry name" value="SAM-dependent_MTases_sf"/>
</dbReference>
<dbReference type="InterPro" id="IPR007848">
    <property type="entry name" value="Small_mtfrase_dom"/>
</dbReference>
<dbReference type="NCBIfam" id="TIGR00536">
    <property type="entry name" value="hemK_fam"/>
    <property type="match status" value="1"/>
</dbReference>
<dbReference type="NCBIfam" id="TIGR03534">
    <property type="entry name" value="RF_mod_PrmC"/>
    <property type="match status" value="1"/>
</dbReference>
<dbReference type="PANTHER" id="PTHR18895">
    <property type="entry name" value="HEMK METHYLTRANSFERASE"/>
    <property type="match status" value="1"/>
</dbReference>
<dbReference type="PANTHER" id="PTHR18895:SF74">
    <property type="entry name" value="MTRF1L RELEASE FACTOR GLUTAMINE METHYLTRANSFERASE"/>
    <property type="match status" value="1"/>
</dbReference>
<dbReference type="Pfam" id="PF05175">
    <property type="entry name" value="MTS"/>
    <property type="match status" value="1"/>
</dbReference>
<dbReference type="Pfam" id="PF17827">
    <property type="entry name" value="PrmC_N"/>
    <property type="match status" value="1"/>
</dbReference>
<dbReference type="SUPFAM" id="SSF53335">
    <property type="entry name" value="S-adenosyl-L-methionine-dependent methyltransferases"/>
    <property type="match status" value="1"/>
</dbReference>
<protein>
    <recommendedName>
        <fullName evidence="1">Release factor glutamine methyltransferase</fullName>
        <shortName evidence="1">RF MTase</shortName>
        <ecNumber evidence="1">2.1.1.297</ecNumber>
    </recommendedName>
    <alternativeName>
        <fullName>M.VchAHemK2P</fullName>
    </alternativeName>
    <alternativeName>
        <fullName evidence="1">N5-glutamine methyltransferase PrmC</fullName>
    </alternativeName>
    <alternativeName>
        <fullName evidence="1">Protein-(glutamine-N5) MTase PrmC</fullName>
    </alternativeName>
    <alternativeName>
        <fullName evidence="1">Protein-glutamine N-methyltransferase PrmC</fullName>
    </alternativeName>
</protein>
<accession>Q9KQ26</accession>
<sequence>MSVTIEAALKAATEQLQQSGSDSPALDAAVLLCHVLAKPRSYLLTWPDKILEKPTLASLELLLARRRAGEPMAYILGEREFWSLPLKVSPSTLIPRPDTERLVELALDKAALIDGELLDLGTGTGAIALALASELPTRQVTGIDLRPEAAELARENATRLAIHNAQFFQGSWFSPLADGTKFALIVSNPPYIEENDPHLSLGDVRFEPKSALVAAENGLADIRHISTHAPHFLLDGGWLLFEHGYDQGVAVRTILRDLGYQNIITEQDYAGHDRVTLGQYKTEREA</sequence>
<gene>
    <name evidence="1" type="primary">prmC</name>
    <name type="synonym">hemK</name>
    <name type="ordered locus">VC_2178</name>
</gene>
<evidence type="ECO:0000255" key="1">
    <source>
        <dbReference type="HAMAP-Rule" id="MF_02126"/>
    </source>
</evidence>
<name>PRMC_VIBCH</name>